<dbReference type="EMBL" id="CP000885">
    <property type="protein sequence ID" value="ABX42944.1"/>
    <property type="molecule type" value="Genomic_DNA"/>
</dbReference>
<dbReference type="RefSeq" id="WP_012200597.1">
    <property type="nucleotide sequence ID" value="NC_010001.1"/>
</dbReference>
<dbReference type="SMR" id="A9KMT3"/>
<dbReference type="STRING" id="357809.Cphy_2583"/>
<dbReference type="KEGG" id="cpy:Cphy_2583"/>
<dbReference type="eggNOG" id="COG1386">
    <property type="taxonomic scope" value="Bacteria"/>
</dbReference>
<dbReference type="HOGENOM" id="CLU_045647_5_3_9"/>
<dbReference type="OrthoDB" id="9806226at2"/>
<dbReference type="Proteomes" id="UP000000370">
    <property type="component" value="Chromosome"/>
</dbReference>
<dbReference type="GO" id="GO:0005737">
    <property type="term" value="C:cytoplasm"/>
    <property type="evidence" value="ECO:0007669"/>
    <property type="project" value="UniProtKB-SubCell"/>
</dbReference>
<dbReference type="GO" id="GO:0051301">
    <property type="term" value="P:cell division"/>
    <property type="evidence" value="ECO:0007669"/>
    <property type="project" value="UniProtKB-KW"/>
</dbReference>
<dbReference type="GO" id="GO:0051304">
    <property type="term" value="P:chromosome separation"/>
    <property type="evidence" value="ECO:0007669"/>
    <property type="project" value="InterPro"/>
</dbReference>
<dbReference type="GO" id="GO:0006260">
    <property type="term" value="P:DNA replication"/>
    <property type="evidence" value="ECO:0007669"/>
    <property type="project" value="UniProtKB-UniRule"/>
</dbReference>
<dbReference type="Gene3D" id="1.10.10.10">
    <property type="entry name" value="Winged helix-like DNA-binding domain superfamily/Winged helix DNA-binding domain"/>
    <property type="match status" value="2"/>
</dbReference>
<dbReference type="HAMAP" id="MF_01804">
    <property type="entry name" value="ScpB"/>
    <property type="match status" value="1"/>
</dbReference>
<dbReference type="InterPro" id="IPR005234">
    <property type="entry name" value="ScpB_csome_segregation"/>
</dbReference>
<dbReference type="InterPro" id="IPR036388">
    <property type="entry name" value="WH-like_DNA-bd_sf"/>
</dbReference>
<dbReference type="InterPro" id="IPR036390">
    <property type="entry name" value="WH_DNA-bd_sf"/>
</dbReference>
<dbReference type="NCBIfam" id="TIGR00281">
    <property type="entry name" value="SMC-Scp complex subunit ScpB"/>
    <property type="match status" value="1"/>
</dbReference>
<dbReference type="PANTHER" id="PTHR34298">
    <property type="entry name" value="SEGREGATION AND CONDENSATION PROTEIN B"/>
    <property type="match status" value="1"/>
</dbReference>
<dbReference type="PANTHER" id="PTHR34298:SF2">
    <property type="entry name" value="SEGREGATION AND CONDENSATION PROTEIN B"/>
    <property type="match status" value="1"/>
</dbReference>
<dbReference type="Pfam" id="PF04079">
    <property type="entry name" value="SMC_ScpB"/>
    <property type="match status" value="1"/>
</dbReference>
<dbReference type="PIRSF" id="PIRSF019345">
    <property type="entry name" value="ScpB"/>
    <property type="match status" value="1"/>
</dbReference>
<dbReference type="SUPFAM" id="SSF46785">
    <property type="entry name" value="Winged helix' DNA-binding domain"/>
    <property type="match status" value="2"/>
</dbReference>
<keyword id="KW-0131">Cell cycle</keyword>
<keyword id="KW-0132">Cell division</keyword>
<keyword id="KW-0159">Chromosome partition</keyword>
<keyword id="KW-0963">Cytoplasm</keyword>
<keyword id="KW-1185">Reference proteome</keyword>
<organism>
    <name type="scientific">Lachnoclostridium phytofermentans (strain ATCC 700394 / DSM 18823 / ISDg)</name>
    <name type="common">Clostridium phytofermentans</name>
    <dbReference type="NCBI Taxonomy" id="357809"/>
    <lineage>
        <taxon>Bacteria</taxon>
        <taxon>Bacillati</taxon>
        <taxon>Bacillota</taxon>
        <taxon>Clostridia</taxon>
        <taxon>Lachnospirales</taxon>
        <taxon>Lachnospiraceae</taxon>
    </lineage>
</organism>
<evidence type="ECO:0000255" key="1">
    <source>
        <dbReference type="HAMAP-Rule" id="MF_01804"/>
    </source>
</evidence>
<reference key="1">
    <citation type="submission" date="2007-11" db="EMBL/GenBank/DDBJ databases">
        <title>Complete genome sequence of Clostridium phytofermentans ISDg.</title>
        <authorList>
            <person name="Leschine S.B."/>
            <person name="Warnick T.A."/>
            <person name="Blanchard J.L."/>
            <person name="Schnell D.J."/>
            <person name="Petit E.L."/>
            <person name="LaTouf W.G."/>
            <person name="Copeland A."/>
            <person name="Lucas S."/>
            <person name="Lapidus A."/>
            <person name="Barry K."/>
            <person name="Glavina del Rio T."/>
            <person name="Dalin E."/>
            <person name="Tice H."/>
            <person name="Pitluck S."/>
            <person name="Kiss H."/>
            <person name="Brettin T."/>
            <person name="Bruce D."/>
            <person name="Detter J.C."/>
            <person name="Han C."/>
            <person name="Kuske C."/>
            <person name="Schmutz J."/>
            <person name="Larimer F."/>
            <person name="Land M."/>
            <person name="Hauser L."/>
            <person name="Kyrpides N."/>
            <person name="Kim E.A."/>
            <person name="Richardson P."/>
        </authorList>
    </citation>
    <scope>NUCLEOTIDE SEQUENCE [LARGE SCALE GENOMIC DNA]</scope>
    <source>
        <strain>ATCC 700394 / DSM 18823 / ISDg</strain>
    </source>
</reference>
<sequence length="189" mass="21442">MEIKKLEAMIEAILFTMGEAVEVERIASALDHDVDTIRKIIHNMMDRYEGDERGIKIIELDNSFQMCTKAQMYEAIVKIAHVPKKHILTDVLLESLSIIAYKQPITKQQIESIRGVKSDHAVNKLVEYNLVCEVGRMDAPGRPILFGTTEDFLRNFGIASLEDLPVVAPEKVADFKMEAEEEVQLQLDI</sequence>
<comment type="function">
    <text evidence="1">Participates in chromosomal partition during cell division. May act via the formation of a condensin-like complex containing Smc and ScpA that pull DNA away from mid-cell into both cell halves.</text>
</comment>
<comment type="subunit">
    <text evidence="1">Homodimer. Homodimerization may be required to stabilize the binding of ScpA to the Smc head domains. Component of a cohesin-like complex composed of ScpA, ScpB and the Smc homodimer, in which ScpA and ScpB bind to the head domain of Smc. The presence of the three proteins is required for the association of the complex with DNA.</text>
</comment>
<comment type="subcellular location">
    <subcellularLocation>
        <location evidence="1">Cytoplasm</location>
    </subcellularLocation>
    <text evidence="1">Associated with two foci at the outer edges of the nucleoid region in young cells, and at four foci within both cell halves in older cells.</text>
</comment>
<comment type="similarity">
    <text evidence="1">Belongs to the ScpB family.</text>
</comment>
<accession>A9KMT3</accession>
<feature type="chain" id="PRO_1000088228" description="Segregation and condensation protein B">
    <location>
        <begin position="1"/>
        <end position="189"/>
    </location>
</feature>
<gene>
    <name evidence="1" type="primary">scpB</name>
    <name type="ordered locus">Cphy_2583</name>
</gene>
<name>SCPB_LACP7</name>
<proteinExistence type="inferred from homology"/>
<protein>
    <recommendedName>
        <fullName evidence="1">Segregation and condensation protein B</fullName>
    </recommendedName>
</protein>